<sequence length="196" mass="21936">MRSAVQWRLCWENDLQLTDHVELSDFFRKIYGRIGSFDAKPFEGGRSWAGARPEVRLIASDAQGIAAHVGILRRFIKVGEVDFLVAELGLYGVRPDLEKLGISFSMRMVHPVLQQLAVPFAFGTVRHAMRSHVERFCREGIAAIVPGVKVRSSRANVHHDLPSTRLEDVIVLVSPIGRSIDEWPPGDVIDRNGSEL</sequence>
<evidence type="ECO:0000255" key="1">
    <source>
        <dbReference type="HAMAP-Rule" id="MF_00084"/>
    </source>
</evidence>
<proteinExistence type="inferred from homology"/>
<gene>
    <name evidence="1" type="primary">nodA</name>
</gene>
<comment type="function">
    <text evidence="1">N-acyltransferase required for nodulation. Acts in the production of a small, heat-stable compound (Nod) that stimulates mitosis in various plant protoplasts.</text>
</comment>
<comment type="subcellular location">
    <subcellularLocation>
        <location evidence="1">Cytoplasm</location>
    </subcellularLocation>
</comment>
<comment type="similarity">
    <text evidence="1">Belongs to the NodA family.</text>
</comment>
<dbReference type="EC" id="2.3.1.-" evidence="1"/>
<dbReference type="EMBL" id="AJ249353">
    <property type="protein sequence ID" value="CAB56292.1"/>
    <property type="molecule type" value="Genomic_DNA"/>
</dbReference>
<dbReference type="GO" id="GO:0005829">
    <property type="term" value="C:cytosol"/>
    <property type="evidence" value="ECO:0007669"/>
    <property type="project" value="InterPro"/>
</dbReference>
<dbReference type="GO" id="GO:0016746">
    <property type="term" value="F:acyltransferase activity"/>
    <property type="evidence" value="ECO:0007669"/>
    <property type="project" value="UniProtKB-UniRule"/>
</dbReference>
<dbReference type="HAMAP" id="MF_00084">
    <property type="entry name" value="NodA"/>
    <property type="match status" value="1"/>
</dbReference>
<dbReference type="InterPro" id="IPR003484">
    <property type="entry name" value="NodA"/>
</dbReference>
<dbReference type="InterPro" id="IPR020567">
    <property type="entry name" value="Nodulation_prot_NodA_CS"/>
</dbReference>
<dbReference type="NCBIfam" id="TIGR04245">
    <property type="entry name" value="nodulat_NodA"/>
    <property type="match status" value="1"/>
</dbReference>
<dbReference type="NCBIfam" id="NF001974">
    <property type="entry name" value="PRK00756.1"/>
    <property type="match status" value="1"/>
</dbReference>
<dbReference type="Pfam" id="PF02474">
    <property type="entry name" value="NodA"/>
    <property type="match status" value="1"/>
</dbReference>
<dbReference type="PROSITE" id="PS01349">
    <property type="entry name" value="NODA"/>
    <property type="match status" value="1"/>
</dbReference>
<reference key="1">
    <citation type="journal article" date="2000" name="Appl. Environ. Microbiol.">
        <title>The common nodulation genes of astragalus sinicus rhizobia are conserved despite chromosomal diversity.</title>
        <authorList>
            <person name="Zhang X.X."/>
            <person name="Turner S.L."/>
            <person name="Guo X.W."/>
            <person name="Yang H.J."/>
            <person name="Debelle F."/>
            <person name="Yang G.P."/>
            <person name="Denarie J."/>
            <person name="Young J.P.W."/>
            <person name="Li F.D."/>
        </authorList>
    </citation>
    <scope>NUCLEOTIDE SEQUENCE [GENOMIC DNA]</scope>
</reference>
<name>NODA_MESS7</name>
<keyword id="KW-0012">Acyltransferase</keyword>
<keyword id="KW-0963">Cytoplasm</keyword>
<keyword id="KW-0536">Nodulation</keyword>
<keyword id="KW-0808">Transferase</keyword>
<organism>
    <name type="scientific">Mesorhizobium sp. (strain 7653R)</name>
    <dbReference type="NCBI Taxonomy" id="103761"/>
    <lineage>
        <taxon>Bacteria</taxon>
        <taxon>Pseudomonadati</taxon>
        <taxon>Pseudomonadota</taxon>
        <taxon>Alphaproteobacteria</taxon>
        <taxon>Hyphomicrobiales</taxon>
        <taxon>Phyllobacteriaceae</taxon>
        <taxon>Mesorhizobium</taxon>
    </lineage>
</organism>
<protein>
    <recommendedName>
        <fullName evidence="1">Nodulation protein A</fullName>
        <ecNumber evidence="1">2.3.1.-</ecNumber>
    </recommendedName>
</protein>
<feature type="chain" id="PRO_0000196335" description="Nodulation protein A">
    <location>
        <begin position="1"/>
        <end position="196"/>
    </location>
</feature>
<accession>Q9RAN9</accession>